<gene>
    <name evidence="1" type="primary">cobQ</name>
    <name type="ordered locus">SARI_00869</name>
</gene>
<sequence length="506" mass="55055">MTQAVMLQGTASDVGKSVLAAGLCRIFYQDGLRTAPFKSQNMALNSGITPDGKEMGRAQIFQAEAAGIMPDVRMNPVLLKPTSDRQAQIVLMGKVATNMDAVSYHDYKPRLREQILAVYNSLAREYDVIVLEGAGSPAEINLRDRDIVNMGMAEMAQCPVILVADIDRGGVFAAIYGTLALLHKQERDRVKGVIINKFRGDVALLYSGIEQIESLTGVPVLGVMPWLDVDLEDEDGVTLQNGKYKGNDDRDITIAIVQLPHISNFTDFNALAAQPDVRIRYVRRPEELADVDLAILPGSKNTLSDLAWLRESGMADAVLQTHRQGVPVMGICGGYQMLGDTIVDEVESGLGTQPGLGLLNTITRFAQDKTTTQVNATMSGELPGWLAAAAGLPVRGYEIHMGETVLQEGCCTAMTLQKNGCPVADGAVTADGLAFGTYLHGLFDSDAFTRAVVNGLRARKGLAPWETTFCYAEHKARQFDLLAEAMRQHIDIDKIYTIMQQHQEPV</sequence>
<proteinExistence type="inferred from homology"/>
<evidence type="ECO:0000255" key="1">
    <source>
        <dbReference type="HAMAP-Rule" id="MF_00028"/>
    </source>
</evidence>
<reference key="1">
    <citation type="submission" date="2007-11" db="EMBL/GenBank/DDBJ databases">
        <authorList>
            <consortium name="The Salmonella enterica serovar Arizonae Genome Sequencing Project"/>
            <person name="McClelland M."/>
            <person name="Sanderson E.K."/>
            <person name="Porwollik S."/>
            <person name="Spieth J."/>
            <person name="Clifton W.S."/>
            <person name="Fulton R."/>
            <person name="Chunyan W."/>
            <person name="Wollam A."/>
            <person name="Shah N."/>
            <person name="Pepin K."/>
            <person name="Bhonagiri V."/>
            <person name="Nash W."/>
            <person name="Johnson M."/>
            <person name="Thiruvilangam P."/>
            <person name="Wilson R."/>
        </authorList>
    </citation>
    <scope>NUCLEOTIDE SEQUENCE [LARGE SCALE GENOMIC DNA]</scope>
    <source>
        <strain>ATCC BAA-731 / CDC346-86 / RSK2980</strain>
    </source>
</reference>
<name>COBQ_SALAR</name>
<accession>A9MLS5</accession>
<protein>
    <recommendedName>
        <fullName evidence="1">Cobyric acid synthase</fullName>
    </recommendedName>
</protein>
<keyword id="KW-0169">Cobalamin biosynthesis</keyword>
<keyword id="KW-0315">Glutamine amidotransferase</keyword>
<keyword id="KW-1185">Reference proteome</keyword>
<organism>
    <name type="scientific">Salmonella arizonae (strain ATCC BAA-731 / CDC346-86 / RSK2980)</name>
    <dbReference type="NCBI Taxonomy" id="41514"/>
    <lineage>
        <taxon>Bacteria</taxon>
        <taxon>Pseudomonadati</taxon>
        <taxon>Pseudomonadota</taxon>
        <taxon>Gammaproteobacteria</taxon>
        <taxon>Enterobacterales</taxon>
        <taxon>Enterobacteriaceae</taxon>
        <taxon>Salmonella</taxon>
    </lineage>
</organism>
<feature type="chain" id="PRO_1000074403" description="Cobyric acid synthase">
    <location>
        <begin position="1"/>
        <end position="506"/>
    </location>
</feature>
<feature type="domain" description="GATase cobBQ-type" evidence="1">
    <location>
        <begin position="251"/>
        <end position="448"/>
    </location>
</feature>
<feature type="active site" description="Nucleophile" evidence="1">
    <location>
        <position position="332"/>
    </location>
</feature>
<feature type="active site" evidence="1">
    <location>
        <position position="440"/>
    </location>
</feature>
<comment type="function">
    <text evidence="1">Catalyzes amidations at positions B, D, E, and G on adenosylcobyrinic A,C-diamide. NH(2) groups are provided by glutamine, and one molecule of ATP is hydrogenolyzed for each amidation.</text>
</comment>
<comment type="pathway">
    <text evidence="1">Cofactor biosynthesis; adenosylcobalamin biosynthesis.</text>
</comment>
<comment type="similarity">
    <text evidence="1">Belongs to the CobB/CobQ family. CobQ subfamily.</text>
</comment>
<dbReference type="EMBL" id="CP000880">
    <property type="protein sequence ID" value="ABX20788.1"/>
    <property type="molecule type" value="Genomic_DNA"/>
</dbReference>
<dbReference type="SMR" id="A9MLS5"/>
<dbReference type="STRING" id="41514.SARI_00869"/>
<dbReference type="KEGG" id="ses:SARI_00869"/>
<dbReference type="HOGENOM" id="CLU_019250_2_2_6"/>
<dbReference type="UniPathway" id="UPA00148"/>
<dbReference type="Proteomes" id="UP000002084">
    <property type="component" value="Chromosome"/>
</dbReference>
<dbReference type="GO" id="GO:0015420">
    <property type="term" value="F:ABC-type vitamin B12 transporter activity"/>
    <property type="evidence" value="ECO:0007669"/>
    <property type="project" value="UniProtKB-UniRule"/>
</dbReference>
<dbReference type="GO" id="GO:0003824">
    <property type="term" value="F:catalytic activity"/>
    <property type="evidence" value="ECO:0007669"/>
    <property type="project" value="InterPro"/>
</dbReference>
<dbReference type="GO" id="GO:0009236">
    <property type="term" value="P:cobalamin biosynthetic process"/>
    <property type="evidence" value="ECO:0007669"/>
    <property type="project" value="UniProtKB-UniRule"/>
</dbReference>
<dbReference type="CDD" id="cd05389">
    <property type="entry name" value="CobQ_N"/>
    <property type="match status" value="1"/>
</dbReference>
<dbReference type="CDD" id="cd01750">
    <property type="entry name" value="GATase1_CobQ"/>
    <property type="match status" value="1"/>
</dbReference>
<dbReference type="Gene3D" id="3.40.50.880">
    <property type="match status" value="1"/>
</dbReference>
<dbReference type="Gene3D" id="3.40.50.300">
    <property type="entry name" value="P-loop containing nucleotide triphosphate hydrolases"/>
    <property type="match status" value="1"/>
</dbReference>
<dbReference type="HAMAP" id="MF_00028">
    <property type="entry name" value="CobQ"/>
    <property type="match status" value="1"/>
</dbReference>
<dbReference type="InterPro" id="IPR029062">
    <property type="entry name" value="Class_I_gatase-like"/>
</dbReference>
<dbReference type="InterPro" id="IPR002586">
    <property type="entry name" value="CobQ/CobB/MinD/ParA_Nub-bd_dom"/>
</dbReference>
<dbReference type="InterPro" id="IPR033949">
    <property type="entry name" value="CobQ_GATase1"/>
</dbReference>
<dbReference type="InterPro" id="IPR047045">
    <property type="entry name" value="CobQ_N"/>
</dbReference>
<dbReference type="InterPro" id="IPR004459">
    <property type="entry name" value="CobQ_synth"/>
</dbReference>
<dbReference type="InterPro" id="IPR011698">
    <property type="entry name" value="GATase_3"/>
</dbReference>
<dbReference type="InterPro" id="IPR027417">
    <property type="entry name" value="P-loop_NTPase"/>
</dbReference>
<dbReference type="NCBIfam" id="TIGR00313">
    <property type="entry name" value="cobQ"/>
    <property type="match status" value="1"/>
</dbReference>
<dbReference type="NCBIfam" id="NF001989">
    <property type="entry name" value="PRK00784.1"/>
    <property type="match status" value="1"/>
</dbReference>
<dbReference type="PANTHER" id="PTHR21343:SF1">
    <property type="entry name" value="COBYRIC ACID SYNTHASE"/>
    <property type="match status" value="1"/>
</dbReference>
<dbReference type="PANTHER" id="PTHR21343">
    <property type="entry name" value="DETHIOBIOTIN SYNTHETASE"/>
    <property type="match status" value="1"/>
</dbReference>
<dbReference type="Pfam" id="PF01656">
    <property type="entry name" value="CbiA"/>
    <property type="match status" value="1"/>
</dbReference>
<dbReference type="Pfam" id="PF07685">
    <property type="entry name" value="GATase_3"/>
    <property type="match status" value="1"/>
</dbReference>
<dbReference type="SUPFAM" id="SSF52317">
    <property type="entry name" value="Class I glutamine amidotransferase-like"/>
    <property type="match status" value="1"/>
</dbReference>
<dbReference type="SUPFAM" id="SSF52540">
    <property type="entry name" value="P-loop containing nucleoside triphosphate hydrolases"/>
    <property type="match status" value="1"/>
</dbReference>
<dbReference type="PROSITE" id="PS51274">
    <property type="entry name" value="GATASE_COBBQ"/>
    <property type="match status" value="1"/>
</dbReference>